<sequence length="198" mass="22495">MLREVIYCGICSYPPEYCEFSGKLKRCKVWLSENHADLYAKLYGTDDNTQEVEAVTNKLAESSIGEAREEKLEKDLLKIQKKQENREQRELAKKLSSKVIIKREARTKRKFIVAISGLEVFDIDMKKLAKTFASRFATGCSVSKNAEKKEEVVIQGDVMDEVETYIHSLLEEKGLKDVKVETIDAKKKKKPAAEGAAK</sequence>
<proteinExistence type="evidence at protein level"/>
<comment type="subunit">
    <text evidence="5">Interacts with the 40S ribosomal subunit.</text>
</comment>
<comment type="interaction">
    <interactant intactId="EBI-5751">
        <id>P47089</id>
    </interactant>
    <interactant intactId="EBI-33141">
        <id>P89886</id>
        <label>TMA20</label>
    </interactant>
    <organismsDiffer>false</organismsDiffer>
    <experiments>3</experiments>
</comment>
<comment type="subcellular location">
    <subcellularLocation>
        <location evidence="3">Cytoplasm</location>
    </subcellularLocation>
</comment>
<comment type="domain">
    <text evidence="2">The SUI1 domain may be involved in RNA binding.</text>
</comment>
<comment type="miscellaneous">
    <text evidence="4">Present with 21600 molecules/cell in log phase SD medium.</text>
</comment>
<comment type="similarity">
    <text evidence="6">Belongs to the DENR family.</text>
</comment>
<keyword id="KW-0963">Cytoplasm</keyword>
<keyword id="KW-1185">Reference proteome</keyword>
<keyword id="KW-0687">Ribonucleoprotein</keyword>
<keyword id="KW-0689">Ribosomal protein</keyword>
<reference key="1">
    <citation type="journal article" date="1996" name="EMBO J.">
        <title>Complete nucleotide sequence of Saccharomyces cerevisiae chromosome X.</title>
        <authorList>
            <person name="Galibert F."/>
            <person name="Alexandraki D."/>
            <person name="Baur A."/>
            <person name="Boles E."/>
            <person name="Chalwatzis N."/>
            <person name="Chuat J.-C."/>
            <person name="Coster F."/>
            <person name="Cziepluch C."/>
            <person name="de Haan M."/>
            <person name="Domdey H."/>
            <person name="Durand P."/>
            <person name="Entian K.-D."/>
            <person name="Gatius M."/>
            <person name="Goffeau A."/>
            <person name="Grivell L.A."/>
            <person name="Hennemann A."/>
            <person name="Herbert C.J."/>
            <person name="Heumann K."/>
            <person name="Hilger F."/>
            <person name="Hollenberg C.P."/>
            <person name="Huang M.-E."/>
            <person name="Jacq C."/>
            <person name="Jauniaux J.-C."/>
            <person name="Katsoulou C."/>
            <person name="Kirchrath L."/>
            <person name="Kleine K."/>
            <person name="Kordes E."/>
            <person name="Koetter P."/>
            <person name="Liebl S."/>
            <person name="Louis E.J."/>
            <person name="Manus V."/>
            <person name="Mewes H.-W."/>
            <person name="Miosga T."/>
            <person name="Obermaier B."/>
            <person name="Perea J."/>
            <person name="Pohl T.M."/>
            <person name="Portetelle D."/>
            <person name="Pujol A."/>
            <person name="Purnelle B."/>
            <person name="Ramezani Rad M."/>
            <person name="Rasmussen S.W."/>
            <person name="Rose M."/>
            <person name="Rossau R."/>
            <person name="Schaaff-Gerstenschlaeger I."/>
            <person name="Smits P.H.M."/>
            <person name="Scarcez T."/>
            <person name="Soriano N."/>
            <person name="To Van D."/>
            <person name="Tzermia M."/>
            <person name="Van Broekhoven A."/>
            <person name="Vandenbol M."/>
            <person name="Wedler H."/>
            <person name="von Wettstein D."/>
            <person name="Wambutt R."/>
            <person name="Zagulski M."/>
            <person name="Zollner A."/>
            <person name="Karpfinger-Hartl L."/>
        </authorList>
    </citation>
    <scope>NUCLEOTIDE SEQUENCE [LARGE SCALE GENOMIC DNA]</scope>
    <source>
        <strain>ATCC 204508 / S288c</strain>
    </source>
</reference>
<reference key="2">
    <citation type="journal article" date="2014" name="G3 (Bethesda)">
        <title>The reference genome sequence of Saccharomyces cerevisiae: Then and now.</title>
        <authorList>
            <person name="Engel S.R."/>
            <person name="Dietrich F.S."/>
            <person name="Fisk D.G."/>
            <person name="Binkley G."/>
            <person name="Balakrishnan R."/>
            <person name="Costanzo M.C."/>
            <person name="Dwight S.S."/>
            <person name="Hitz B.C."/>
            <person name="Karra K."/>
            <person name="Nash R.S."/>
            <person name="Weng S."/>
            <person name="Wong E.D."/>
            <person name="Lloyd P."/>
            <person name="Skrzypek M.S."/>
            <person name="Miyasato S.R."/>
            <person name="Simison M."/>
            <person name="Cherry J.M."/>
        </authorList>
    </citation>
    <scope>GENOME REANNOTATION</scope>
    <source>
        <strain>ATCC 204508 / S288c</strain>
    </source>
</reference>
<reference key="3">
    <citation type="journal article" date="2007" name="Genome Res.">
        <title>Approaching a complete repository of sequence-verified protein-encoding clones for Saccharomyces cerevisiae.</title>
        <authorList>
            <person name="Hu Y."/>
            <person name="Rolfs A."/>
            <person name="Bhullar B."/>
            <person name="Murthy T.V.S."/>
            <person name="Zhu C."/>
            <person name="Berger M.F."/>
            <person name="Camargo A.A."/>
            <person name="Kelley F."/>
            <person name="McCarron S."/>
            <person name="Jepson D."/>
            <person name="Richardson A."/>
            <person name="Raphael J."/>
            <person name="Moreira D."/>
            <person name="Taycher E."/>
            <person name="Zuo D."/>
            <person name="Mohr S."/>
            <person name="Kane M.F."/>
            <person name="Williamson J."/>
            <person name="Simpson A.J.G."/>
            <person name="Bulyk M.L."/>
            <person name="Harlow E."/>
            <person name="Marsischky G."/>
            <person name="Kolodner R.D."/>
            <person name="LaBaer J."/>
        </authorList>
    </citation>
    <scope>NUCLEOTIDE SEQUENCE [GENOMIC DNA]</scope>
    <source>
        <strain>ATCC 204508 / S288c</strain>
    </source>
</reference>
<reference key="4">
    <citation type="journal article" date="1999" name="J. Mol. Evol.">
        <title>Novel predicted RNA-binding domains associated with the translation machinery.</title>
        <authorList>
            <person name="Aravind L."/>
            <person name="Koonin E.V."/>
        </authorList>
    </citation>
    <scope>DOMAIN</scope>
</reference>
<reference key="5">
    <citation type="journal article" date="2003" name="Nature">
        <title>Global analysis of protein localization in budding yeast.</title>
        <authorList>
            <person name="Huh W.-K."/>
            <person name="Falvo J.V."/>
            <person name="Gerke L.C."/>
            <person name="Carroll A.S."/>
            <person name="Howson R.W."/>
            <person name="Weissman J.S."/>
            <person name="O'Shea E.K."/>
        </authorList>
    </citation>
    <scope>SUBCELLULAR LOCATION [LARGE SCALE ANALYSIS]</scope>
</reference>
<reference key="6">
    <citation type="journal article" date="2003" name="Nature">
        <title>Global analysis of protein expression in yeast.</title>
        <authorList>
            <person name="Ghaemmaghami S."/>
            <person name="Huh W.-K."/>
            <person name="Bower K."/>
            <person name="Howson R.W."/>
            <person name="Belle A."/>
            <person name="Dephoure N."/>
            <person name="O'Shea E.K."/>
            <person name="Weissman J.S."/>
        </authorList>
    </citation>
    <scope>LEVEL OF PROTEIN EXPRESSION [LARGE SCALE ANALYSIS]</scope>
</reference>
<reference key="7">
    <citation type="journal article" date="2006" name="Genes Dev.">
        <title>Systematic identification and functional screens of uncharacterized proteins associated with eukaryotic ribosomal complexes.</title>
        <authorList>
            <person name="Fleischer T.C."/>
            <person name="Weaver C.M."/>
            <person name="McAfee K.J."/>
            <person name="Jennings J.L."/>
            <person name="Link A.J."/>
        </authorList>
    </citation>
    <scope>IDENTIFICATION BY MASS SPECTROMETRY</scope>
    <scope>SUBUNIT</scope>
</reference>
<reference key="8">
    <citation type="journal article" date="2008" name="Mol. Cell. Proteomics">
        <title>A multidimensional chromatography technology for in-depth phosphoproteome analysis.</title>
        <authorList>
            <person name="Albuquerque C.P."/>
            <person name="Smolka M.B."/>
            <person name="Payne S.H."/>
            <person name="Bafna V."/>
            <person name="Eng J."/>
            <person name="Zhou H."/>
        </authorList>
    </citation>
    <scope>IDENTIFICATION BY MASS SPECTROMETRY [LARGE SCALE ANALYSIS]</scope>
</reference>
<name>DENR_YEAST</name>
<protein>
    <recommendedName>
        <fullName>Translation machinery-associated protein 22</fullName>
    </recommendedName>
    <alternativeName>
        <fullName>Density-regulated protein homolog</fullName>
    </alternativeName>
</protein>
<feature type="chain" id="PRO_0000130609" description="Translation machinery-associated protein 22">
    <location>
        <begin position="1"/>
        <end position="198"/>
    </location>
</feature>
<feature type="domain" description="SUI1" evidence="1">
    <location>
        <begin position="99"/>
        <end position="170"/>
    </location>
</feature>
<dbReference type="EMBL" id="Z49514">
    <property type="protein sequence ID" value="CAA89538.1"/>
    <property type="molecule type" value="Genomic_DNA"/>
</dbReference>
<dbReference type="EMBL" id="X87611">
    <property type="protein sequence ID" value="CAA60937.1"/>
    <property type="molecule type" value="Genomic_DNA"/>
</dbReference>
<dbReference type="EMBL" id="AY557898">
    <property type="protein sequence ID" value="AAS56224.1"/>
    <property type="molecule type" value="Genomic_DNA"/>
</dbReference>
<dbReference type="EMBL" id="BK006943">
    <property type="protein sequence ID" value="DAA08806.1"/>
    <property type="molecule type" value="Genomic_DNA"/>
</dbReference>
<dbReference type="PIR" id="S55203">
    <property type="entry name" value="S55203"/>
</dbReference>
<dbReference type="RefSeq" id="NP_012548.1">
    <property type="nucleotide sequence ID" value="NM_001181672.1"/>
</dbReference>
<dbReference type="SMR" id="P47089"/>
<dbReference type="BioGRID" id="33770">
    <property type="interactions" value="188"/>
</dbReference>
<dbReference type="DIP" id="DIP-6768N"/>
<dbReference type="FunCoup" id="P47089">
    <property type="interactions" value="1393"/>
</dbReference>
<dbReference type="IntAct" id="P47089">
    <property type="interactions" value="16"/>
</dbReference>
<dbReference type="MINT" id="P47089"/>
<dbReference type="STRING" id="4932.YJR014W"/>
<dbReference type="iPTMnet" id="P47089"/>
<dbReference type="PaxDb" id="4932-YJR014W"/>
<dbReference type="PeptideAtlas" id="P47089"/>
<dbReference type="EnsemblFungi" id="YJR014W_mRNA">
    <property type="protein sequence ID" value="YJR014W"/>
    <property type="gene ID" value="YJR014W"/>
</dbReference>
<dbReference type="GeneID" id="853471"/>
<dbReference type="KEGG" id="sce:YJR014W"/>
<dbReference type="AGR" id="SGD:S000003775"/>
<dbReference type="SGD" id="S000003775">
    <property type="gene designation" value="TMA22"/>
</dbReference>
<dbReference type="VEuPathDB" id="FungiDB:YJR014W"/>
<dbReference type="eggNOG" id="KOG3239">
    <property type="taxonomic scope" value="Eukaryota"/>
</dbReference>
<dbReference type="GeneTree" id="ENSGT00390000014349"/>
<dbReference type="HOGENOM" id="CLU_073511_0_1_1"/>
<dbReference type="InParanoid" id="P47089"/>
<dbReference type="OMA" id="EVFEIDM"/>
<dbReference type="OrthoDB" id="277199at2759"/>
<dbReference type="BioCyc" id="YEAST:G3O-31659-MONOMER"/>
<dbReference type="BioGRID-ORCS" id="853471">
    <property type="hits" value="0 hits in 10 CRISPR screens"/>
</dbReference>
<dbReference type="PRO" id="PR:P47089"/>
<dbReference type="Proteomes" id="UP000002311">
    <property type="component" value="Chromosome X"/>
</dbReference>
<dbReference type="RNAct" id="P47089">
    <property type="molecule type" value="protein"/>
</dbReference>
<dbReference type="GO" id="GO:0005737">
    <property type="term" value="C:cytoplasm"/>
    <property type="evidence" value="ECO:0007005"/>
    <property type="project" value="SGD"/>
</dbReference>
<dbReference type="GO" id="GO:1990904">
    <property type="term" value="C:ribonucleoprotein complex"/>
    <property type="evidence" value="ECO:0007669"/>
    <property type="project" value="UniProtKB-KW"/>
</dbReference>
<dbReference type="GO" id="GO:0005840">
    <property type="term" value="C:ribosome"/>
    <property type="evidence" value="ECO:0007669"/>
    <property type="project" value="UniProtKB-KW"/>
</dbReference>
<dbReference type="GO" id="GO:0003723">
    <property type="term" value="F:RNA binding"/>
    <property type="evidence" value="ECO:0000250"/>
    <property type="project" value="SGD"/>
</dbReference>
<dbReference type="GO" id="GO:0003743">
    <property type="term" value="F:translation initiation factor activity"/>
    <property type="evidence" value="ECO:0007669"/>
    <property type="project" value="InterPro"/>
</dbReference>
<dbReference type="GO" id="GO:0001731">
    <property type="term" value="P:formation of translation preinitiation complex"/>
    <property type="evidence" value="ECO:0000318"/>
    <property type="project" value="GO_Central"/>
</dbReference>
<dbReference type="GO" id="GO:0000184">
    <property type="term" value="P:nuclear-transcribed mRNA catabolic process, nonsense-mediated decay"/>
    <property type="evidence" value="ECO:0000315"/>
    <property type="project" value="SGD"/>
</dbReference>
<dbReference type="GO" id="GO:0032790">
    <property type="term" value="P:ribosome disassembly"/>
    <property type="evidence" value="ECO:0000315"/>
    <property type="project" value="SGD"/>
</dbReference>
<dbReference type="GO" id="GO:0002188">
    <property type="term" value="P:translation reinitiation"/>
    <property type="evidence" value="ECO:0000318"/>
    <property type="project" value="GO_Central"/>
</dbReference>
<dbReference type="CDD" id="cd11607">
    <property type="entry name" value="DENR_C"/>
    <property type="match status" value="1"/>
</dbReference>
<dbReference type="FunFam" id="3.30.780.10:FF:000013">
    <property type="entry name" value="Translation machinery-associated protein 22"/>
    <property type="match status" value="1"/>
</dbReference>
<dbReference type="Gene3D" id="3.30.780.10">
    <property type="entry name" value="SUI1-like domain"/>
    <property type="match status" value="1"/>
</dbReference>
<dbReference type="InterPro" id="IPR050318">
    <property type="entry name" value="DENR/SUI1_TIF"/>
</dbReference>
<dbReference type="InterPro" id="IPR046447">
    <property type="entry name" value="DENR_C"/>
</dbReference>
<dbReference type="InterPro" id="IPR005873">
    <property type="entry name" value="DENR_eukaryotes"/>
</dbReference>
<dbReference type="InterPro" id="IPR048517">
    <property type="entry name" value="DENR_N"/>
</dbReference>
<dbReference type="InterPro" id="IPR001950">
    <property type="entry name" value="SUI1"/>
</dbReference>
<dbReference type="InterPro" id="IPR036877">
    <property type="entry name" value="SUI1_dom_sf"/>
</dbReference>
<dbReference type="NCBIfam" id="TIGR01159">
    <property type="entry name" value="DRP1"/>
    <property type="match status" value="1"/>
</dbReference>
<dbReference type="PANTHER" id="PTHR12789:SF0">
    <property type="entry name" value="DENSITY-REGULATED PROTEIN"/>
    <property type="match status" value="1"/>
</dbReference>
<dbReference type="PANTHER" id="PTHR12789">
    <property type="entry name" value="DENSITY-REGULATED PROTEIN HOMOLOG"/>
    <property type="match status" value="1"/>
</dbReference>
<dbReference type="Pfam" id="PF21023">
    <property type="entry name" value="DENR_N"/>
    <property type="match status" value="1"/>
</dbReference>
<dbReference type="Pfam" id="PF01253">
    <property type="entry name" value="SUI1"/>
    <property type="match status" value="1"/>
</dbReference>
<dbReference type="SUPFAM" id="SSF55159">
    <property type="entry name" value="eIF1-like"/>
    <property type="match status" value="1"/>
</dbReference>
<dbReference type="PROSITE" id="PS50296">
    <property type="entry name" value="SUI1"/>
    <property type="match status" value="1"/>
</dbReference>
<gene>
    <name type="primary">TMA22</name>
    <name type="synonym">RBF22</name>
    <name type="ordered locus">YJR014W</name>
    <name type="ORF">J1446</name>
    <name type="ORF">YJR83.12</name>
</gene>
<organism>
    <name type="scientific">Saccharomyces cerevisiae (strain ATCC 204508 / S288c)</name>
    <name type="common">Baker's yeast</name>
    <dbReference type="NCBI Taxonomy" id="559292"/>
    <lineage>
        <taxon>Eukaryota</taxon>
        <taxon>Fungi</taxon>
        <taxon>Dikarya</taxon>
        <taxon>Ascomycota</taxon>
        <taxon>Saccharomycotina</taxon>
        <taxon>Saccharomycetes</taxon>
        <taxon>Saccharomycetales</taxon>
        <taxon>Saccharomycetaceae</taxon>
        <taxon>Saccharomyces</taxon>
    </lineage>
</organism>
<evidence type="ECO:0000255" key="1">
    <source>
        <dbReference type="PROSITE-ProRule" id="PRU00200"/>
    </source>
</evidence>
<evidence type="ECO:0000269" key="2">
    <source>
    </source>
</evidence>
<evidence type="ECO:0000269" key="3">
    <source>
    </source>
</evidence>
<evidence type="ECO:0000269" key="4">
    <source>
    </source>
</evidence>
<evidence type="ECO:0000269" key="5">
    <source>
    </source>
</evidence>
<evidence type="ECO:0000305" key="6"/>
<accession>P47089</accession>
<accession>D6VWJ0</accession>